<gene>
    <name type="primary">DPH3P1</name>
    <name type="synonym">C20orf143</name>
    <name type="synonym">DPH3B</name>
    <name type="synonym">ZCSL1</name>
</gene>
<name>DPH3B_HUMAN</name>
<comment type="domain">
    <text evidence="1">The DPH-type metal-binding (MB) domain can bind either zinc or iron ions.</text>
</comment>
<comment type="similarity">
    <text evidence="2">Belongs to the DPH3 family.</text>
</comment>
<comment type="caution">
    <text evidence="2">Could be the product of a pseudogene.</text>
</comment>
<reference key="1">
    <citation type="journal article" date="2001" name="Nature">
        <title>The DNA sequence and comparative analysis of human chromosome 20.</title>
        <authorList>
            <person name="Deloukas P."/>
            <person name="Matthews L.H."/>
            <person name="Ashurst J.L."/>
            <person name="Burton J."/>
            <person name="Gilbert J.G.R."/>
            <person name="Jones M."/>
            <person name="Stavrides G."/>
            <person name="Almeida J.P."/>
            <person name="Babbage A.K."/>
            <person name="Bagguley C.L."/>
            <person name="Bailey J."/>
            <person name="Barlow K.F."/>
            <person name="Bates K.N."/>
            <person name="Beard L.M."/>
            <person name="Beare D.M."/>
            <person name="Beasley O.P."/>
            <person name="Bird C.P."/>
            <person name="Blakey S.E."/>
            <person name="Bridgeman A.M."/>
            <person name="Brown A.J."/>
            <person name="Buck D."/>
            <person name="Burrill W.D."/>
            <person name="Butler A.P."/>
            <person name="Carder C."/>
            <person name="Carter N.P."/>
            <person name="Chapman J.C."/>
            <person name="Clamp M."/>
            <person name="Clark G."/>
            <person name="Clark L.N."/>
            <person name="Clark S.Y."/>
            <person name="Clee C.M."/>
            <person name="Clegg S."/>
            <person name="Cobley V.E."/>
            <person name="Collier R.E."/>
            <person name="Connor R.E."/>
            <person name="Corby N.R."/>
            <person name="Coulson A."/>
            <person name="Coville G.J."/>
            <person name="Deadman R."/>
            <person name="Dhami P.D."/>
            <person name="Dunn M."/>
            <person name="Ellington A.G."/>
            <person name="Frankland J.A."/>
            <person name="Fraser A."/>
            <person name="French L."/>
            <person name="Garner P."/>
            <person name="Grafham D.V."/>
            <person name="Griffiths C."/>
            <person name="Griffiths M.N.D."/>
            <person name="Gwilliam R."/>
            <person name="Hall R.E."/>
            <person name="Hammond S."/>
            <person name="Harley J.L."/>
            <person name="Heath P.D."/>
            <person name="Ho S."/>
            <person name="Holden J.L."/>
            <person name="Howden P.J."/>
            <person name="Huckle E."/>
            <person name="Hunt A.R."/>
            <person name="Hunt S.E."/>
            <person name="Jekosch K."/>
            <person name="Johnson C.M."/>
            <person name="Johnson D."/>
            <person name="Kay M.P."/>
            <person name="Kimberley A.M."/>
            <person name="King A."/>
            <person name="Knights A."/>
            <person name="Laird G.K."/>
            <person name="Lawlor S."/>
            <person name="Lehvaeslaiho M.H."/>
            <person name="Leversha M.A."/>
            <person name="Lloyd C."/>
            <person name="Lloyd D.M."/>
            <person name="Lovell J.D."/>
            <person name="Marsh V.L."/>
            <person name="Martin S.L."/>
            <person name="McConnachie L.J."/>
            <person name="McLay K."/>
            <person name="McMurray A.A."/>
            <person name="Milne S.A."/>
            <person name="Mistry D."/>
            <person name="Moore M.J.F."/>
            <person name="Mullikin J.C."/>
            <person name="Nickerson T."/>
            <person name="Oliver K."/>
            <person name="Parker A."/>
            <person name="Patel R."/>
            <person name="Pearce T.A.V."/>
            <person name="Peck A.I."/>
            <person name="Phillimore B.J.C.T."/>
            <person name="Prathalingam S.R."/>
            <person name="Plumb R.W."/>
            <person name="Ramsay H."/>
            <person name="Rice C.M."/>
            <person name="Ross M.T."/>
            <person name="Scott C.E."/>
            <person name="Sehra H.K."/>
            <person name="Shownkeen R."/>
            <person name="Sims S."/>
            <person name="Skuce C.D."/>
            <person name="Smith M.L."/>
            <person name="Soderlund C."/>
            <person name="Steward C.A."/>
            <person name="Sulston J.E."/>
            <person name="Swann R.M."/>
            <person name="Sycamore N."/>
            <person name="Taylor R."/>
            <person name="Tee L."/>
            <person name="Thomas D.W."/>
            <person name="Thorpe A."/>
            <person name="Tracey A."/>
            <person name="Tromans A.C."/>
            <person name="Vaudin M."/>
            <person name="Wall M."/>
            <person name="Wallis J.M."/>
            <person name="Whitehead S.L."/>
            <person name="Whittaker P."/>
            <person name="Willey D.L."/>
            <person name="Williams L."/>
            <person name="Williams S.A."/>
            <person name="Wilming L."/>
            <person name="Wray P.W."/>
            <person name="Hubbard T."/>
            <person name="Durbin R.M."/>
            <person name="Bentley D.R."/>
            <person name="Beck S."/>
            <person name="Rogers J."/>
        </authorList>
    </citation>
    <scope>NUCLEOTIDE SEQUENCE [LARGE SCALE GENOMIC DNA]</scope>
</reference>
<proteinExistence type="uncertain"/>
<keyword id="KW-0408">Iron</keyword>
<keyword id="KW-0479">Metal-binding</keyword>
<keyword id="KW-1185">Reference proteome</keyword>
<keyword id="KW-0862">Zinc</keyword>
<feature type="chain" id="PRO_0000082618" description="Putative DPH3 homolog B">
    <location>
        <begin position="1"/>
        <end position="78"/>
    </location>
</feature>
<feature type="domain" description="DPH-type MB" evidence="1">
    <location>
        <begin position="4"/>
        <end position="60"/>
    </location>
</feature>
<feature type="binding site" evidence="1">
    <location>
        <position position="26"/>
    </location>
    <ligand>
        <name>Zn(2+)</name>
        <dbReference type="ChEBI" id="CHEBI:29105"/>
    </ligand>
</feature>
<feature type="binding site" evidence="1">
    <location>
        <position position="28"/>
    </location>
    <ligand>
        <name>Zn(2+)</name>
        <dbReference type="ChEBI" id="CHEBI:29105"/>
    </ligand>
</feature>
<feature type="binding site" evidence="1">
    <location>
        <position position="48"/>
    </location>
    <ligand>
        <name>Zn(2+)</name>
        <dbReference type="ChEBI" id="CHEBI:29105"/>
    </ligand>
</feature>
<feature type="binding site" evidence="1">
    <location>
        <position position="51"/>
    </location>
    <ligand>
        <name>Zn(2+)</name>
        <dbReference type="ChEBI" id="CHEBI:29105"/>
    </ligand>
</feature>
<dbReference type="EMBL" id="AL035669">
    <property type="status" value="NOT_ANNOTATED_CDS"/>
    <property type="molecule type" value="Genomic_DNA"/>
</dbReference>
<dbReference type="RefSeq" id="NP_542788.1">
    <property type="nucleotide sequence ID" value="NM_080750.4"/>
</dbReference>
<dbReference type="SMR" id="Q9H4G8"/>
<dbReference type="FunCoup" id="Q9H4G8">
    <property type="interactions" value="15"/>
</dbReference>
<dbReference type="BioMuta" id="HGNC:16136"/>
<dbReference type="PeptideAtlas" id="Q9H4G8"/>
<dbReference type="DNASU" id="100132911"/>
<dbReference type="AGR" id="HGNC:16136"/>
<dbReference type="GeneCards" id="DPH3P1"/>
<dbReference type="HGNC" id="HGNC:16136">
    <property type="gene designation" value="DPH3P1"/>
</dbReference>
<dbReference type="neXtProt" id="NX_Q9H4G8"/>
<dbReference type="PharmGKB" id="PA25686"/>
<dbReference type="InParanoid" id="Q9H4G8"/>
<dbReference type="PAN-GO" id="Q9H4G8">
    <property type="GO annotations" value="4 GO annotations based on evolutionary models"/>
</dbReference>
<dbReference type="PhylomeDB" id="Q9H4G8"/>
<dbReference type="PathwayCommons" id="Q9H4G8"/>
<dbReference type="BioGRID-ORCS" id="100132911">
    <property type="hits" value="20 hits in 233 CRISPR screens"/>
</dbReference>
<dbReference type="ChiTaRS" id="DPH3P1">
    <property type="organism name" value="human"/>
</dbReference>
<dbReference type="GenomeRNAi" id="100132911"/>
<dbReference type="Pharos" id="Q9H4G8">
    <property type="development level" value="Tdark"/>
</dbReference>
<dbReference type="Proteomes" id="UP000005640">
    <property type="component" value="Unplaced"/>
</dbReference>
<dbReference type="RNAct" id="Q9H4G8">
    <property type="molecule type" value="protein"/>
</dbReference>
<dbReference type="GO" id="GO:0046872">
    <property type="term" value="F:metal ion binding"/>
    <property type="evidence" value="ECO:0007669"/>
    <property type="project" value="UniProtKB-KW"/>
</dbReference>
<dbReference type="GO" id="GO:0017183">
    <property type="term" value="P:protein histidyl modification to diphthamide"/>
    <property type="evidence" value="ECO:0007669"/>
    <property type="project" value="InterPro"/>
</dbReference>
<dbReference type="FunFam" id="3.10.660.10:FF:000001">
    <property type="entry name" value="Diphthamide biosynthesis 3"/>
    <property type="match status" value="1"/>
</dbReference>
<dbReference type="Gene3D" id="3.10.660.10">
    <property type="entry name" value="DPH Zinc finger"/>
    <property type="match status" value="1"/>
</dbReference>
<dbReference type="InterPro" id="IPR044248">
    <property type="entry name" value="DPH3/4-like"/>
</dbReference>
<dbReference type="InterPro" id="IPR007872">
    <property type="entry name" value="DPH_MB_dom"/>
</dbReference>
<dbReference type="InterPro" id="IPR036671">
    <property type="entry name" value="DPH_MB_sf"/>
</dbReference>
<dbReference type="PANTHER" id="PTHR21454:SF23">
    <property type="entry name" value="DPH3 HOMOLOG B-RELATED"/>
    <property type="match status" value="1"/>
</dbReference>
<dbReference type="PANTHER" id="PTHR21454">
    <property type="entry name" value="DPH3 HOMOLOG-RELATED"/>
    <property type="match status" value="1"/>
</dbReference>
<dbReference type="Pfam" id="PF05207">
    <property type="entry name" value="Zn_ribbon_CSL"/>
    <property type="match status" value="1"/>
</dbReference>
<dbReference type="SUPFAM" id="SSF144217">
    <property type="entry name" value="CSL zinc finger"/>
    <property type="match status" value="1"/>
</dbReference>
<dbReference type="PROSITE" id="PS51074">
    <property type="entry name" value="DPH_MB"/>
    <property type="match status" value="1"/>
</dbReference>
<sequence length="78" mass="8721">MAVFHDEVEIEDFQYDEDSETYFCPCPCGDNFSITKEELENGEGVAMCPGCSLIIKVIYDKDQFACGETVPVPSVNKE</sequence>
<accession>Q9H4G8</accession>
<protein>
    <recommendedName>
        <fullName>Putative DPH3 homolog B</fullName>
    </recommendedName>
    <alternativeName>
        <fullName>CSL-type zinc finger-containing protein 1</fullName>
    </alternativeName>
</protein>
<evidence type="ECO:0000255" key="1">
    <source>
        <dbReference type="PROSITE-ProRule" id="PRU00456"/>
    </source>
</evidence>
<evidence type="ECO:0000305" key="2"/>
<organism>
    <name type="scientific">Homo sapiens</name>
    <name type="common">Human</name>
    <dbReference type="NCBI Taxonomy" id="9606"/>
    <lineage>
        <taxon>Eukaryota</taxon>
        <taxon>Metazoa</taxon>
        <taxon>Chordata</taxon>
        <taxon>Craniata</taxon>
        <taxon>Vertebrata</taxon>
        <taxon>Euteleostomi</taxon>
        <taxon>Mammalia</taxon>
        <taxon>Eutheria</taxon>
        <taxon>Euarchontoglires</taxon>
        <taxon>Primates</taxon>
        <taxon>Haplorrhini</taxon>
        <taxon>Catarrhini</taxon>
        <taxon>Hominidae</taxon>
        <taxon>Homo</taxon>
    </lineage>
</organism>